<name>OSTC_MOUSE</name>
<protein>
    <recommendedName>
        <fullName evidence="3">Oligosaccharyltransferase complex subunit OSTC</fullName>
    </recommendedName>
</protein>
<dbReference type="EMBL" id="AK009237">
    <property type="protein sequence ID" value="BAB26158.1"/>
    <property type="molecule type" value="mRNA"/>
</dbReference>
<dbReference type="EMBL" id="AK011085">
    <property type="protein sequence ID" value="BAB27389.1"/>
    <property type="molecule type" value="mRNA"/>
</dbReference>
<dbReference type="EMBL" id="AK013011">
    <property type="protein sequence ID" value="BAB28595.2"/>
    <property type="status" value="ALT_INIT"/>
    <property type="molecule type" value="mRNA"/>
</dbReference>
<dbReference type="EMBL" id="AK135332">
    <property type="protein sequence ID" value="BAE22491.1"/>
    <property type="molecule type" value="mRNA"/>
</dbReference>
<dbReference type="EMBL" id="BC021935">
    <property type="protein sequence ID" value="AAH21935.1"/>
    <property type="molecule type" value="mRNA"/>
</dbReference>
<dbReference type="CCDS" id="CCDS38639.1"/>
<dbReference type="RefSeq" id="NP_079785.1">
    <property type="nucleotide sequence ID" value="NM_025509.3"/>
</dbReference>
<dbReference type="SMR" id="Q78XF5"/>
<dbReference type="BioGRID" id="211409">
    <property type="interactions" value="1"/>
</dbReference>
<dbReference type="ComplexPortal" id="CPX-5821">
    <property type="entry name" value="Oligosaccharyltransferase complex A"/>
</dbReference>
<dbReference type="FunCoup" id="Q78XF5">
    <property type="interactions" value="959"/>
</dbReference>
<dbReference type="IntAct" id="Q78XF5">
    <property type="interactions" value="1"/>
</dbReference>
<dbReference type="STRING" id="10090.ENSMUSP00000046480"/>
<dbReference type="GlyGen" id="Q78XF5">
    <property type="glycosylation" value="1 site, 1 O-linked glycan (1 site)"/>
</dbReference>
<dbReference type="iPTMnet" id="Q78XF5"/>
<dbReference type="PhosphoSitePlus" id="Q78XF5"/>
<dbReference type="SwissPalm" id="Q78XF5"/>
<dbReference type="jPOST" id="Q78XF5"/>
<dbReference type="PaxDb" id="10090-ENSMUSP00000046480"/>
<dbReference type="PeptideAtlas" id="Q78XF5"/>
<dbReference type="ProteomicsDB" id="295482"/>
<dbReference type="Pumba" id="Q78XF5"/>
<dbReference type="Antibodypedia" id="26281">
    <property type="antibodies" value="85 antibodies from 21 providers"/>
</dbReference>
<dbReference type="DNASU" id="66357"/>
<dbReference type="Ensembl" id="ENSMUST00000043937.9">
    <property type="protein sequence ID" value="ENSMUSP00000046480.8"/>
    <property type="gene ID" value="ENSMUSG00000041084.9"/>
</dbReference>
<dbReference type="GeneID" id="66357"/>
<dbReference type="KEGG" id="mmu:66357"/>
<dbReference type="UCSC" id="uc008rjc.2">
    <property type="organism name" value="mouse"/>
</dbReference>
<dbReference type="AGR" id="MGI:1913607"/>
<dbReference type="CTD" id="58505"/>
<dbReference type="MGI" id="MGI:1913607">
    <property type="gene designation" value="Ostc"/>
</dbReference>
<dbReference type="VEuPathDB" id="HostDB:ENSMUSG00000041084"/>
<dbReference type="eggNOG" id="KOG3356">
    <property type="taxonomic scope" value="Eukaryota"/>
</dbReference>
<dbReference type="GeneTree" id="ENSGT00390000001376"/>
<dbReference type="HOGENOM" id="CLU_109136_1_0_1"/>
<dbReference type="InParanoid" id="Q78XF5"/>
<dbReference type="OMA" id="CWIFMRM"/>
<dbReference type="OrthoDB" id="10256333at2759"/>
<dbReference type="PhylomeDB" id="Q78XF5"/>
<dbReference type="TreeFam" id="TF323315"/>
<dbReference type="UniPathway" id="UPA00378"/>
<dbReference type="BioGRID-ORCS" id="66357">
    <property type="hits" value="5 hits in 79 CRISPR screens"/>
</dbReference>
<dbReference type="ChiTaRS" id="Ostc">
    <property type="organism name" value="mouse"/>
</dbReference>
<dbReference type="PRO" id="PR:Q78XF5"/>
<dbReference type="Proteomes" id="UP000000589">
    <property type="component" value="Chromosome 3"/>
</dbReference>
<dbReference type="RNAct" id="Q78XF5">
    <property type="molecule type" value="protein"/>
</dbReference>
<dbReference type="Bgee" id="ENSMUSG00000041084">
    <property type="expression patterns" value="Expressed in humerus cartilage element and 183 other cell types or tissues"/>
</dbReference>
<dbReference type="GO" id="GO:0005789">
    <property type="term" value="C:endoplasmic reticulum membrane"/>
    <property type="evidence" value="ECO:0000303"/>
    <property type="project" value="ComplexPortal"/>
</dbReference>
<dbReference type="GO" id="GO:0008250">
    <property type="term" value="C:oligosaccharyltransferase complex"/>
    <property type="evidence" value="ECO:0000303"/>
    <property type="project" value="ComplexPortal"/>
</dbReference>
<dbReference type="GO" id="GO:0160226">
    <property type="term" value="C:oligosaccharyltransferase complex A"/>
    <property type="evidence" value="ECO:0007669"/>
    <property type="project" value="Ensembl"/>
</dbReference>
<dbReference type="GO" id="GO:0030674">
    <property type="term" value="F:protein-macromolecule adaptor activity"/>
    <property type="evidence" value="ECO:0007669"/>
    <property type="project" value="Ensembl"/>
</dbReference>
<dbReference type="GO" id="GO:0043686">
    <property type="term" value="P:co-translational protein modification"/>
    <property type="evidence" value="ECO:0007669"/>
    <property type="project" value="Ensembl"/>
</dbReference>
<dbReference type="GO" id="GO:0018279">
    <property type="term" value="P:protein N-linked glycosylation via asparagine"/>
    <property type="evidence" value="ECO:0007669"/>
    <property type="project" value="Ensembl"/>
</dbReference>
<dbReference type="InterPro" id="IPR021149">
    <property type="entry name" value="OligosaccharylTrfase_OST3/OST6"/>
</dbReference>
<dbReference type="InterPro" id="IPR042416">
    <property type="entry name" value="OSTC"/>
</dbReference>
<dbReference type="PANTHER" id="PTHR13160">
    <property type="entry name" value="OLIGOSACCHARYLTRANSFERASE COMPLEX SUBUNIT OSTC"/>
    <property type="match status" value="1"/>
</dbReference>
<dbReference type="PANTHER" id="PTHR13160:SF9">
    <property type="entry name" value="OLIGOSACCHARYLTRANSFERASE COMPLEX SUBUNIT OSTC"/>
    <property type="match status" value="1"/>
</dbReference>
<dbReference type="Pfam" id="PF04756">
    <property type="entry name" value="OST3_OST6"/>
    <property type="match status" value="1"/>
</dbReference>
<keyword id="KW-0256">Endoplasmic reticulum</keyword>
<keyword id="KW-0472">Membrane</keyword>
<keyword id="KW-1185">Reference proteome</keyword>
<keyword id="KW-0812">Transmembrane</keyword>
<keyword id="KW-1133">Transmembrane helix</keyword>
<comment type="function">
    <text evidence="1">Subunit of STT3A-containing oligosaccharyl transferase (OST-A) complex that catalyzes the initial transfer of a defined glycan (Glc(3)Man(9)GlcNAc(2) in eukaryotes) from the lipid carrier dolichol-pyrophosphate to an asparagine residue within an Asn-X-Ser/Thr consensus motif in nascent polypeptide chains, the first step in protein N-glycosylation. N-glycosylation occurs cotranslationally and the complex associates with the Sec61 complex at the channel-forming translocon complex that mediates protein translocation across the endoplasmic reticulum (ER). Within the OST-A complex, acts as an adapter that anchors the OST-A complex to the Sec61 complex. May be involved in N-glycosylation of APP (amyloid-beta precursor protein). Can modulate gamma-secretase cleavage of APP by enhancing endoprotelysis of PSEN1.</text>
</comment>
<comment type="pathway">
    <text evidence="1">Protein modification; protein glycosylation.</text>
</comment>
<comment type="subunit">
    <text evidence="1">Component of STT3A-containing oligosaccharyl transferase (OST-A) complex. STT3A-containing complex assembly occurs through the formation of 3 subcomplexes. Subcomplex 1 contains RPN1 and TMEM258, subcomplex 2 contains the STT3A-specific subunits STT3A, DC2/OSTC, and KCP2 as well as the core subunit OST4, and subcomplex 3 contains RPN2, DAD1, and OST48. The OST-A complex can form stable complexes with the Sec61 complex or with both the Sec61 and TRAP complexes. Interacts with PSEN1 and NCSTN; indicative for an association with the gamma-secretase complex.</text>
</comment>
<comment type="subcellular location">
    <subcellularLocation>
        <location evidence="1">Endoplasmic reticulum</location>
    </subcellularLocation>
    <subcellularLocation>
        <location evidence="3">Membrane</location>
        <topology evidence="3">Multi-pass membrane protein</topology>
    </subcellularLocation>
</comment>
<comment type="similarity">
    <text evidence="3">Belongs to the OSTC family.</text>
</comment>
<comment type="sequence caution" evidence="3">
    <conflict type="erroneous initiation">
        <sequence resource="EMBL-CDS" id="BAB28595"/>
    </conflict>
</comment>
<reference key="1">
    <citation type="journal article" date="2005" name="Science">
        <title>The transcriptional landscape of the mammalian genome.</title>
        <authorList>
            <person name="Carninci P."/>
            <person name="Kasukawa T."/>
            <person name="Katayama S."/>
            <person name="Gough J."/>
            <person name="Frith M.C."/>
            <person name="Maeda N."/>
            <person name="Oyama R."/>
            <person name="Ravasi T."/>
            <person name="Lenhard B."/>
            <person name="Wells C."/>
            <person name="Kodzius R."/>
            <person name="Shimokawa K."/>
            <person name="Bajic V.B."/>
            <person name="Brenner S.E."/>
            <person name="Batalov S."/>
            <person name="Forrest A.R."/>
            <person name="Zavolan M."/>
            <person name="Davis M.J."/>
            <person name="Wilming L.G."/>
            <person name="Aidinis V."/>
            <person name="Allen J.E."/>
            <person name="Ambesi-Impiombato A."/>
            <person name="Apweiler R."/>
            <person name="Aturaliya R.N."/>
            <person name="Bailey T.L."/>
            <person name="Bansal M."/>
            <person name="Baxter L."/>
            <person name="Beisel K.W."/>
            <person name="Bersano T."/>
            <person name="Bono H."/>
            <person name="Chalk A.M."/>
            <person name="Chiu K.P."/>
            <person name="Choudhary V."/>
            <person name="Christoffels A."/>
            <person name="Clutterbuck D.R."/>
            <person name="Crowe M.L."/>
            <person name="Dalla E."/>
            <person name="Dalrymple B.P."/>
            <person name="de Bono B."/>
            <person name="Della Gatta G."/>
            <person name="di Bernardo D."/>
            <person name="Down T."/>
            <person name="Engstrom P."/>
            <person name="Fagiolini M."/>
            <person name="Faulkner G."/>
            <person name="Fletcher C.F."/>
            <person name="Fukushima T."/>
            <person name="Furuno M."/>
            <person name="Futaki S."/>
            <person name="Gariboldi M."/>
            <person name="Georgii-Hemming P."/>
            <person name="Gingeras T.R."/>
            <person name="Gojobori T."/>
            <person name="Green R.E."/>
            <person name="Gustincich S."/>
            <person name="Harbers M."/>
            <person name="Hayashi Y."/>
            <person name="Hensch T.K."/>
            <person name="Hirokawa N."/>
            <person name="Hill D."/>
            <person name="Huminiecki L."/>
            <person name="Iacono M."/>
            <person name="Ikeo K."/>
            <person name="Iwama A."/>
            <person name="Ishikawa T."/>
            <person name="Jakt M."/>
            <person name="Kanapin A."/>
            <person name="Katoh M."/>
            <person name="Kawasawa Y."/>
            <person name="Kelso J."/>
            <person name="Kitamura H."/>
            <person name="Kitano H."/>
            <person name="Kollias G."/>
            <person name="Krishnan S.P."/>
            <person name="Kruger A."/>
            <person name="Kummerfeld S.K."/>
            <person name="Kurochkin I.V."/>
            <person name="Lareau L.F."/>
            <person name="Lazarevic D."/>
            <person name="Lipovich L."/>
            <person name="Liu J."/>
            <person name="Liuni S."/>
            <person name="McWilliam S."/>
            <person name="Madan Babu M."/>
            <person name="Madera M."/>
            <person name="Marchionni L."/>
            <person name="Matsuda H."/>
            <person name="Matsuzawa S."/>
            <person name="Miki H."/>
            <person name="Mignone F."/>
            <person name="Miyake S."/>
            <person name="Morris K."/>
            <person name="Mottagui-Tabar S."/>
            <person name="Mulder N."/>
            <person name="Nakano N."/>
            <person name="Nakauchi H."/>
            <person name="Ng P."/>
            <person name="Nilsson R."/>
            <person name="Nishiguchi S."/>
            <person name="Nishikawa S."/>
            <person name="Nori F."/>
            <person name="Ohara O."/>
            <person name="Okazaki Y."/>
            <person name="Orlando V."/>
            <person name="Pang K.C."/>
            <person name="Pavan W.J."/>
            <person name="Pavesi G."/>
            <person name="Pesole G."/>
            <person name="Petrovsky N."/>
            <person name="Piazza S."/>
            <person name="Reed J."/>
            <person name="Reid J.F."/>
            <person name="Ring B.Z."/>
            <person name="Ringwald M."/>
            <person name="Rost B."/>
            <person name="Ruan Y."/>
            <person name="Salzberg S.L."/>
            <person name="Sandelin A."/>
            <person name="Schneider C."/>
            <person name="Schoenbach C."/>
            <person name="Sekiguchi K."/>
            <person name="Semple C.A."/>
            <person name="Seno S."/>
            <person name="Sessa L."/>
            <person name="Sheng Y."/>
            <person name="Shibata Y."/>
            <person name="Shimada H."/>
            <person name="Shimada K."/>
            <person name="Silva D."/>
            <person name="Sinclair B."/>
            <person name="Sperling S."/>
            <person name="Stupka E."/>
            <person name="Sugiura K."/>
            <person name="Sultana R."/>
            <person name="Takenaka Y."/>
            <person name="Taki K."/>
            <person name="Tammoja K."/>
            <person name="Tan S.L."/>
            <person name="Tang S."/>
            <person name="Taylor M.S."/>
            <person name="Tegner J."/>
            <person name="Teichmann S.A."/>
            <person name="Ueda H.R."/>
            <person name="van Nimwegen E."/>
            <person name="Verardo R."/>
            <person name="Wei C.L."/>
            <person name="Yagi K."/>
            <person name="Yamanishi H."/>
            <person name="Zabarovsky E."/>
            <person name="Zhu S."/>
            <person name="Zimmer A."/>
            <person name="Hide W."/>
            <person name="Bult C."/>
            <person name="Grimmond S.M."/>
            <person name="Teasdale R.D."/>
            <person name="Liu E.T."/>
            <person name="Brusic V."/>
            <person name="Quackenbush J."/>
            <person name="Wahlestedt C."/>
            <person name="Mattick J.S."/>
            <person name="Hume D.A."/>
            <person name="Kai C."/>
            <person name="Sasaki D."/>
            <person name="Tomaru Y."/>
            <person name="Fukuda S."/>
            <person name="Kanamori-Katayama M."/>
            <person name="Suzuki M."/>
            <person name="Aoki J."/>
            <person name="Arakawa T."/>
            <person name="Iida J."/>
            <person name="Imamura K."/>
            <person name="Itoh M."/>
            <person name="Kato T."/>
            <person name="Kawaji H."/>
            <person name="Kawagashira N."/>
            <person name="Kawashima T."/>
            <person name="Kojima M."/>
            <person name="Kondo S."/>
            <person name="Konno H."/>
            <person name="Nakano K."/>
            <person name="Ninomiya N."/>
            <person name="Nishio T."/>
            <person name="Okada M."/>
            <person name="Plessy C."/>
            <person name="Shibata K."/>
            <person name="Shiraki T."/>
            <person name="Suzuki S."/>
            <person name="Tagami M."/>
            <person name="Waki K."/>
            <person name="Watahiki A."/>
            <person name="Okamura-Oho Y."/>
            <person name="Suzuki H."/>
            <person name="Kawai J."/>
            <person name="Hayashizaki Y."/>
        </authorList>
    </citation>
    <scope>NUCLEOTIDE SEQUENCE [LARGE SCALE MRNA]</scope>
    <source>
        <strain>C57BL/6J</strain>
        <tissue>Embryo</tissue>
        <tissue>Liver</tissue>
        <tissue>Tongue</tissue>
    </source>
</reference>
<reference key="2">
    <citation type="journal article" date="2004" name="Genome Res.">
        <title>The status, quality, and expansion of the NIH full-length cDNA project: the Mammalian Gene Collection (MGC).</title>
        <authorList>
            <consortium name="The MGC Project Team"/>
        </authorList>
    </citation>
    <scope>NUCLEOTIDE SEQUENCE [LARGE SCALE MRNA]</scope>
    <source>
        <strain>C57BL/6J</strain>
        <strain>FVB/N</strain>
        <tissue>Mammary tumor</tissue>
    </source>
</reference>
<reference key="3">
    <citation type="journal article" date="2010" name="Cell">
        <title>A tissue-specific atlas of mouse protein phosphorylation and expression.</title>
        <authorList>
            <person name="Huttlin E.L."/>
            <person name="Jedrychowski M.P."/>
            <person name="Elias J.E."/>
            <person name="Goswami T."/>
            <person name="Rad R."/>
            <person name="Beausoleil S.A."/>
            <person name="Villen J."/>
            <person name="Haas W."/>
            <person name="Sowa M.E."/>
            <person name="Gygi S.P."/>
        </authorList>
    </citation>
    <scope>IDENTIFICATION BY MASS SPECTROMETRY [LARGE SCALE ANALYSIS]</scope>
    <source>
        <tissue>Heart</tissue>
        <tissue>Kidney</tissue>
        <tissue>Liver</tissue>
        <tissue>Lung</tissue>
        <tissue>Pancreas</tissue>
        <tissue>Spleen</tissue>
        <tissue>Testis</tissue>
    </source>
</reference>
<sequence length="149" mass="16815">METLYRVPFLVLECPNLKLKKPPWVHMPSAMTVYALVVVSYFLITGGIIYDVIVEPPSVGSMTDEHGHQRPVAFLAYRVNGQYIMEGLASSFLFTMGGLGFIILDRSNAPNIPKLNRFLLLFIGFVCVLLSFFMARVFMRMKLPGYLMG</sequence>
<evidence type="ECO:0000250" key="1">
    <source>
        <dbReference type="UniProtKB" id="Q9NRP0"/>
    </source>
</evidence>
<evidence type="ECO:0000255" key="2"/>
<evidence type="ECO:0000305" key="3"/>
<evidence type="ECO:0000312" key="4">
    <source>
        <dbReference type="MGI" id="MGI:1913607"/>
    </source>
</evidence>
<feature type="chain" id="PRO_0000320603" description="Oligosaccharyltransferase complex subunit OSTC">
    <location>
        <begin position="1"/>
        <end position="149"/>
    </location>
</feature>
<feature type="topological domain" description="Cytoplasmic" evidence="2">
    <location>
        <begin position="1"/>
        <end position="32"/>
    </location>
</feature>
<feature type="transmembrane region" description="Helical" evidence="2">
    <location>
        <begin position="33"/>
        <end position="53"/>
    </location>
</feature>
<feature type="topological domain" description="Extracellular" evidence="2">
    <location>
        <begin position="54"/>
        <end position="83"/>
    </location>
</feature>
<feature type="transmembrane region" description="Helical" evidence="2">
    <location>
        <begin position="84"/>
        <end position="104"/>
    </location>
</feature>
<feature type="topological domain" description="Cytoplasmic" evidence="2">
    <location>
        <begin position="105"/>
        <end position="117"/>
    </location>
</feature>
<feature type="transmembrane region" description="Helical" evidence="2">
    <location>
        <begin position="118"/>
        <end position="138"/>
    </location>
</feature>
<feature type="topological domain" description="Extracellular" evidence="2">
    <location>
        <begin position="139"/>
        <end position="149"/>
    </location>
</feature>
<proteinExistence type="evidence at protein level"/>
<gene>
    <name evidence="4" type="primary">Ostc</name>
</gene>
<accession>Q78XF5</accession>
<accession>Q9CPZ2</accession>
<organism>
    <name type="scientific">Mus musculus</name>
    <name type="common">Mouse</name>
    <dbReference type="NCBI Taxonomy" id="10090"/>
    <lineage>
        <taxon>Eukaryota</taxon>
        <taxon>Metazoa</taxon>
        <taxon>Chordata</taxon>
        <taxon>Craniata</taxon>
        <taxon>Vertebrata</taxon>
        <taxon>Euteleostomi</taxon>
        <taxon>Mammalia</taxon>
        <taxon>Eutheria</taxon>
        <taxon>Euarchontoglires</taxon>
        <taxon>Glires</taxon>
        <taxon>Rodentia</taxon>
        <taxon>Myomorpha</taxon>
        <taxon>Muroidea</taxon>
        <taxon>Muridae</taxon>
        <taxon>Murinae</taxon>
        <taxon>Mus</taxon>
        <taxon>Mus</taxon>
    </lineage>
</organism>